<dbReference type="EC" id="3.5.1.103" evidence="1"/>
<dbReference type="EMBL" id="CP000431">
    <property type="protein sequence ID" value="ABG97712.1"/>
    <property type="molecule type" value="Genomic_DNA"/>
</dbReference>
<dbReference type="RefSeq" id="WP_011598013.1">
    <property type="nucleotide sequence ID" value="NC_008268.1"/>
</dbReference>
<dbReference type="SMR" id="Q0S424"/>
<dbReference type="KEGG" id="rha:RHA1_ro05935"/>
<dbReference type="PATRIC" id="fig|101510.16.peg.5980"/>
<dbReference type="eggNOG" id="COG2120">
    <property type="taxonomic scope" value="Bacteria"/>
</dbReference>
<dbReference type="HOGENOM" id="CLU_049311_2_1_11"/>
<dbReference type="OrthoDB" id="158614at2"/>
<dbReference type="Proteomes" id="UP000008710">
    <property type="component" value="Chromosome"/>
</dbReference>
<dbReference type="GO" id="GO:0035595">
    <property type="term" value="F:N-acetylglucosaminylinositol deacetylase activity"/>
    <property type="evidence" value="ECO:0007669"/>
    <property type="project" value="UniProtKB-EC"/>
</dbReference>
<dbReference type="GO" id="GO:0008270">
    <property type="term" value="F:zinc ion binding"/>
    <property type="evidence" value="ECO:0007669"/>
    <property type="project" value="UniProtKB-UniRule"/>
</dbReference>
<dbReference type="GO" id="GO:0010125">
    <property type="term" value="P:mycothiol biosynthetic process"/>
    <property type="evidence" value="ECO:0007669"/>
    <property type="project" value="UniProtKB-UniRule"/>
</dbReference>
<dbReference type="Gene3D" id="3.40.50.10320">
    <property type="entry name" value="LmbE-like"/>
    <property type="match status" value="1"/>
</dbReference>
<dbReference type="HAMAP" id="MF_01696">
    <property type="entry name" value="MshB"/>
    <property type="match status" value="1"/>
</dbReference>
<dbReference type="InterPro" id="IPR003737">
    <property type="entry name" value="GlcNAc_PI_deacetylase-related"/>
</dbReference>
<dbReference type="InterPro" id="IPR024078">
    <property type="entry name" value="LmbE-like_dom_sf"/>
</dbReference>
<dbReference type="InterPro" id="IPR017810">
    <property type="entry name" value="Mycothiol_biosynthesis_MshB"/>
</dbReference>
<dbReference type="NCBIfam" id="TIGR03445">
    <property type="entry name" value="mycothiol_MshB"/>
    <property type="match status" value="1"/>
</dbReference>
<dbReference type="PANTHER" id="PTHR12993:SF26">
    <property type="entry name" value="1D-MYO-INOSITOL 2-ACETAMIDO-2-DEOXY-ALPHA-D-GLUCOPYRANOSIDE DEACETYLASE"/>
    <property type="match status" value="1"/>
</dbReference>
<dbReference type="PANTHER" id="PTHR12993">
    <property type="entry name" value="N-ACETYLGLUCOSAMINYL-PHOSPHATIDYLINOSITOL DE-N-ACETYLASE-RELATED"/>
    <property type="match status" value="1"/>
</dbReference>
<dbReference type="Pfam" id="PF02585">
    <property type="entry name" value="PIG-L"/>
    <property type="match status" value="1"/>
</dbReference>
<dbReference type="SUPFAM" id="SSF102588">
    <property type="entry name" value="LmbE-like"/>
    <property type="match status" value="1"/>
</dbReference>
<accession>Q0S424</accession>
<keyword id="KW-0378">Hydrolase</keyword>
<keyword id="KW-0479">Metal-binding</keyword>
<keyword id="KW-0862">Zinc</keyword>
<comment type="function">
    <text evidence="1">Catalyzes the deacetylation of 1D-myo-inositol 2-acetamido-2-deoxy-alpha-D-glucopyranoside (GlcNAc-Ins) in the mycothiol biosynthesis pathway.</text>
</comment>
<comment type="catalytic activity">
    <reaction evidence="1">
        <text>1D-myo-inositol 2-acetamido-2-deoxy-alpha-D-glucopyranoside + H2O = 1D-myo-inositol 2-amino-2-deoxy-alpha-D-glucopyranoside + acetate</text>
        <dbReference type="Rhea" id="RHEA:26180"/>
        <dbReference type="ChEBI" id="CHEBI:15377"/>
        <dbReference type="ChEBI" id="CHEBI:30089"/>
        <dbReference type="ChEBI" id="CHEBI:52442"/>
        <dbReference type="ChEBI" id="CHEBI:58886"/>
        <dbReference type="EC" id="3.5.1.103"/>
    </reaction>
</comment>
<comment type="cofactor">
    <cofactor evidence="1">
        <name>Zn(2+)</name>
        <dbReference type="ChEBI" id="CHEBI:29105"/>
    </cofactor>
    <text evidence="1">Binds 1 zinc ion per subunit.</text>
</comment>
<comment type="similarity">
    <text evidence="1">Belongs to the MshB deacetylase family.</text>
</comment>
<gene>
    <name evidence="1" type="primary">mshB</name>
    <name type="ordered locus">RHA1_ro05935</name>
</gene>
<proteinExistence type="inferred from homology"/>
<feature type="chain" id="PRO_0000400216" description="1D-myo-inositol 2-acetamido-2-deoxy-alpha-D-glucopyranoside deacetylase">
    <location>
        <begin position="1"/>
        <end position="292"/>
    </location>
</feature>
<feature type="binding site" evidence="1">
    <location>
        <position position="12"/>
    </location>
    <ligand>
        <name>Zn(2+)</name>
        <dbReference type="ChEBI" id="CHEBI:29105"/>
    </ligand>
</feature>
<feature type="binding site" evidence="1">
    <location>
        <position position="15"/>
    </location>
    <ligand>
        <name>Zn(2+)</name>
        <dbReference type="ChEBI" id="CHEBI:29105"/>
    </ligand>
</feature>
<feature type="binding site" evidence="1">
    <location>
        <position position="147"/>
    </location>
    <ligand>
        <name>Zn(2+)</name>
        <dbReference type="ChEBI" id="CHEBI:29105"/>
    </ligand>
</feature>
<evidence type="ECO:0000255" key="1">
    <source>
        <dbReference type="HAMAP-Rule" id="MF_01696"/>
    </source>
</evidence>
<reference key="1">
    <citation type="journal article" date="2006" name="Proc. Natl. Acad. Sci. U.S.A.">
        <title>The complete genome of Rhodococcus sp. RHA1 provides insights into a catabolic powerhouse.</title>
        <authorList>
            <person name="McLeod M.P."/>
            <person name="Warren R.L."/>
            <person name="Hsiao W.W.L."/>
            <person name="Araki N."/>
            <person name="Myhre M."/>
            <person name="Fernandes C."/>
            <person name="Miyazawa D."/>
            <person name="Wong W."/>
            <person name="Lillquist A.L."/>
            <person name="Wang D."/>
            <person name="Dosanjh M."/>
            <person name="Hara H."/>
            <person name="Petrescu A."/>
            <person name="Morin R.D."/>
            <person name="Yang G."/>
            <person name="Stott J.M."/>
            <person name="Schein J.E."/>
            <person name="Shin H."/>
            <person name="Smailus D."/>
            <person name="Siddiqui A.S."/>
            <person name="Marra M.A."/>
            <person name="Jones S.J.M."/>
            <person name="Holt R."/>
            <person name="Brinkman F.S.L."/>
            <person name="Miyauchi K."/>
            <person name="Fukuda M."/>
            <person name="Davies J.E."/>
            <person name="Mohn W.W."/>
            <person name="Eltis L.D."/>
        </authorList>
    </citation>
    <scope>NUCLEOTIDE SEQUENCE [LARGE SCALE GENOMIC DNA]</scope>
    <source>
        <strain>RHA1</strain>
    </source>
</reference>
<organism>
    <name type="scientific">Rhodococcus jostii (strain RHA1)</name>
    <dbReference type="NCBI Taxonomy" id="101510"/>
    <lineage>
        <taxon>Bacteria</taxon>
        <taxon>Bacillati</taxon>
        <taxon>Actinomycetota</taxon>
        <taxon>Actinomycetes</taxon>
        <taxon>Mycobacteriales</taxon>
        <taxon>Nocardiaceae</taxon>
        <taxon>Rhodococcus</taxon>
    </lineage>
</organism>
<sequence length="292" mass="30775">MSERRLLLVHAHPDDETLTTGGTIARYAADGADVHVLTCTLGEEGEVIGEEWAQLVADAADQLGGFRIGELTSALSCLGAGRPRFLLGAGHFRDSGMAGTASAADPRAFVNADRDSLTAAIVAVIRELRPHVVVTYDPDGGYGHPDHIQVHTVTTAAVEAAGSAQYPDCGEPWEVAKLYWTVTEASALESGICRIGDIPDGWRLPEPGELPSVPDADVTTVIDVRAVLDAKREALSAHATQVTVAPSGTEYALSNDIAQPILAEEHFVLVRGAAGERDADGRERDLFGGIGH</sequence>
<protein>
    <recommendedName>
        <fullName evidence="1">1D-myo-inositol 2-acetamido-2-deoxy-alpha-D-glucopyranoside deacetylase</fullName>
        <shortName evidence="1">GlcNAc-Ins deacetylase</shortName>
        <ecNumber evidence="1">3.5.1.103</ecNumber>
    </recommendedName>
    <alternativeName>
        <fullName>N-acetyl-1-D-myo-inositol 2-amino-2-deoxy-alpha-D-glucopyranoside deacetylase</fullName>
    </alternativeName>
</protein>
<name>MSHB_RHOJR</name>